<name>CYB_PELGA</name>
<proteinExistence type="inferred from homology"/>
<comment type="function">
    <text evidence="2">Component of the ubiquinol-cytochrome c reductase complex (complex III or cytochrome b-c1 complex) that is part of the mitochondrial respiratory chain. The b-c1 complex mediates electron transfer from ubiquinol to cytochrome c. Contributes to the generation of a proton gradient across the mitochondrial membrane that is then used for ATP synthesis.</text>
</comment>
<comment type="cofactor">
    <cofactor evidence="2">
        <name>heme b</name>
        <dbReference type="ChEBI" id="CHEBI:60344"/>
    </cofactor>
    <text evidence="2">Binds 2 heme b groups non-covalently.</text>
</comment>
<comment type="subunit">
    <text evidence="2">The cytochrome bc1 complex contains 11 subunits: 3 respiratory subunits (MT-CYB, CYC1 and UQCRFS1), 2 core proteins (UQCRC1 and UQCRC2) and 6 low-molecular weight proteins (UQCRH/QCR6, UQCRB/QCR7, UQCRQ/QCR8, UQCR10/QCR9, UQCR11/QCR10 and a cleavage product of UQCRFS1). This cytochrome bc1 complex then forms a dimer.</text>
</comment>
<comment type="subcellular location">
    <subcellularLocation>
        <location evidence="2">Mitochondrion inner membrane</location>
        <topology evidence="2">Multi-pass membrane protein</topology>
    </subcellularLocation>
</comment>
<comment type="miscellaneous">
    <text evidence="1">Heme 1 (or BL or b562) is low-potential and absorbs at about 562 nm, and heme 2 (or BH or b566) is high-potential and absorbs at about 566 nm.</text>
</comment>
<comment type="similarity">
    <text evidence="3 4">Belongs to the cytochrome b family.</text>
</comment>
<comment type="caution">
    <text evidence="2">The full-length protein contains only eight transmembrane helices, not nine as predicted by bioinformatics tools.</text>
</comment>
<geneLocation type="mitochondrion"/>
<organism>
    <name type="scientific">Pelecanoides garnotii</name>
    <name type="common">Peruvian diving petrel</name>
    <dbReference type="NCBI Taxonomy" id="79637"/>
    <lineage>
        <taxon>Eukaryota</taxon>
        <taxon>Metazoa</taxon>
        <taxon>Chordata</taxon>
        <taxon>Craniata</taxon>
        <taxon>Vertebrata</taxon>
        <taxon>Euteleostomi</taxon>
        <taxon>Archelosauria</taxon>
        <taxon>Archosauria</taxon>
        <taxon>Dinosauria</taxon>
        <taxon>Saurischia</taxon>
        <taxon>Theropoda</taxon>
        <taxon>Coelurosauria</taxon>
        <taxon>Aves</taxon>
        <taxon>Neognathae</taxon>
        <taxon>Neoaves</taxon>
        <taxon>Aequornithes</taxon>
        <taxon>Procellariiformes</taxon>
        <taxon>Procellariidae</taxon>
        <taxon>Pelecanoides</taxon>
    </lineage>
</organism>
<evidence type="ECO:0000250" key="1"/>
<evidence type="ECO:0000250" key="2">
    <source>
        <dbReference type="UniProtKB" id="P00157"/>
    </source>
</evidence>
<evidence type="ECO:0000255" key="3">
    <source>
        <dbReference type="PROSITE-ProRule" id="PRU00967"/>
    </source>
</evidence>
<evidence type="ECO:0000255" key="4">
    <source>
        <dbReference type="PROSITE-ProRule" id="PRU00968"/>
    </source>
</evidence>
<gene>
    <name type="primary">MT-CYB</name>
    <name type="synonym">COB</name>
    <name type="synonym">CYTB</name>
    <name type="synonym">MTCYB</name>
</gene>
<reference key="1">
    <citation type="journal article" date="1998" name="Mol. Biol. Evol.">
        <title>Body size effects and rates of cytochrome-b evolution in tube-nosed seabirds.</title>
        <authorList>
            <person name="Nunn G.B."/>
            <person name="Stanley S.E."/>
        </authorList>
    </citation>
    <scope>NUCLEOTIDE SEQUENCE [GENOMIC DNA]</scope>
    <source>
        <strain>Isolate PDP-1</strain>
    </source>
</reference>
<dbReference type="EMBL" id="AF076073">
    <property type="protein sequence ID" value="AAC68630.1"/>
    <property type="molecule type" value="Genomic_DNA"/>
</dbReference>
<dbReference type="SMR" id="O79218"/>
<dbReference type="GO" id="GO:0005743">
    <property type="term" value="C:mitochondrial inner membrane"/>
    <property type="evidence" value="ECO:0007669"/>
    <property type="project" value="UniProtKB-SubCell"/>
</dbReference>
<dbReference type="GO" id="GO:0045275">
    <property type="term" value="C:respiratory chain complex III"/>
    <property type="evidence" value="ECO:0007669"/>
    <property type="project" value="InterPro"/>
</dbReference>
<dbReference type="GO" id="GO:0046872">
    <property type="term" value="F:metal ion binding"/>
    <property type="evidence" value="ECO:0007669"/>
    <property type="project" value="UniProtKB-KW"/>
</dbReference>
<dbReference type="GO" id="GO:0008121">
    <property type="term" value="F:ubiquinol-cytochrome-c reductase activity"/>
    <property type="evidence" value="ECO:0007669"/>
    <property type="project" value="InterPro"/>
</dbReference>
<dbReference type="GO" id="GO:0006122">
    <property type="term" value="P:mitochondrial electron transport, ubiquinol to cytochrome c"/>
    <property type="evidence" value="ECO:0007669"/>
    <property type="project" value="TreeGrafter"/>
</dbReference>
<dbReference type="CDD" id="cd00290">
    <property type="entry name" value="cytochrome_b_C"/>
    <property type="match status" value="1"/>
</dbReference>
<dbReference type="CDD" id="cd00284">
    <property type="entry name" value="Cytochrome_b_N"/>
    <property type="match status" value="1"/>
</dbReference>
<dbReference type="FunFam" id="1.20.810.10:FF:000002">
    <property type="entry name" value="Cytochrome b"/>
    <property type="match status" value="1"/>
</dbReference>
<dbReference type="Gene3D" id="1.20.810.10">
    <property type="entry name" value="Cytochrome Bc1 Complex, Chain C"/>
    <property type="match status" value="1"/>
</dbReference>
<dbReference type="InterPro" id="IPR005798">
    <property type="entry name" value="Cyt_b/b6_C"/>
</dbReference>
<dbReference type="InterPro" id="IPR036150">
    <property type="entry name" value="Cyt_b/b6_C_sf"/>
</dbReference>
<dbReference type="InterPro" id="IPR005797">
    <property type="entry name" value="Cyt_b/b6_N"/>
</dbReference>
<dbReference type="InterPro" id="IPR027387">
    <property type="entry name" value="Cytb/b6-like_sf"/>
</dbReference>
<dbReference type="InterPro" id="IPR030689">
    <property type="entry name" value="Cytochrome_b"/>
</dbReference>
<dbReference type="InterPro" id="IPR048260">
    <property type="entry name" value="Cytochrome_b_C_euk/bac"/>
</dbReference>
<dbReference type="InterPro" id="IPR048259">
    <property type="entry name" value="Cytochrome_b_N_euk/bac"/>
</dbReference>
<dbReference type="InterPro" id="IPR016174">
    <property type="entry name" value="Di-haem_cyt_TM"/>
</dbReference>
<dbReference type="PANTHER" id="PTHR19271">
    <property type="entry name" value="CYTOCHROME B"/>
    <property type="match status" value="1"/>
</dbReference>
<dbReference type="PANTHER" id="PTHR19271:SF16">
    <property type="entry name" value="CYTOCHROME B"/>
    <property type="match status" value="1"/>
</dbReference>
<dbReference type="Pfam" id="PF00032">
    <property type="entry name" value="Cytochrom_B_C"/>
    <property type="match status" value="1"/>
</dbReference>
<dbReference type="Pfam" id="PF00033">
    <property type="entry name" value="Cytochrome_B"/>
    <property type="match status" value="1"/>
</dbReference>
<dbReference type="PIRSF" id="PIRSF038885">
    <property type="entry name" value="COB"/>
    <property type="match status" value="1"/>
</dbReference>
<dbReference type="SUPFAM" id="SSF81648">
    <property type="entry name" value="a domain/subunit of cytochrome bc1 complex (Ubiquinol-cytochrome c reductase)"/>
    <property type="match status" value="1"/>
</dbReference>
<dbReference type="SUPFAM" id="SSF81342">
    <property type="entry name" value="Transmembrane di-heme cytochromes"/>
    <property type="match status" value="1"/>
</dbReference>
<dbReference type="PROSITE" id="PS51003">
    <property type="entry name" value="CYTB_CTER"/>
    <property type="match status" value="1"/>
</dbReference>
<dbReference type="PROSITE" id="PS51002">
    <property type="entry name" value="CYTB_NTER"/>
    <property type="match status" value="1"/>
</dbReference>
<keyword id="KW-0249">Electron transport</keyword>
<keyword id="KW-0349">Heme</keyword>
<keyword id="KW-0408">Iron</keyword>
<keyword id="KW-0472">Membrane</keyword>
<keyword id="KW-0479">Metal-binding</keyword>
<keyword id="KW-0496">Mitochondrion</keyword>
<keyword id="KW-0999">Mitochondrion inner membrane</keyword>
<keyword id="KW-0679">Respiratory chain</keyword>
<keyword id="KW-0812">Transmembrane</keyword>
<keyword id="KW-1133">Transmembrane helix</keyword>
<keyword id="KW-0813">Transport</keyword>
<keyword id="KW-0830">Ubiquinone</keyword>
<sequence length="380" mass="42654">MAPNLRKSHPLLKMVNNSLIDLPVPSNISAWWNFGSLLTICLLTQILTGLLLAMHYTADTTLAFSSVAHTCRNVQYGWLIRNLHANGASFFFICIYLHIGRGLYYGSYLYKETWNTGVILLLTLMATAFVGYVLPWGQMSFWGATVITNLFSAIPYIGQTLVEWAWGGFSVDNPTLTRFFALHFLLPFMIVGLSMIHLTFLHESGSNNPLGIVSDCDKIPFHPYFSLKDILGFILMLLPLTTLALFSPNLLGDPENFTPANPLITPPHIKPEWYFLFAYAILRSIPNKLGGVLALAASVLILFLAPFLHKAKQRTMTFRPISQLLFWILVANLLILTWVGSQPVEHPFIIIGQLASITYFTILLILFPIVGALENKMLNY</sequence>
<protein>
    <recommendedName>
        <fullName>Cytochrome b</fullName>
    </recommendedName>
    <alternativeName>
        <fullName>Complex III subunit 3</fullName>
    </alternativeName>
    <alternativeName>
        <fullName>Complex III subunit III</fullName>
    </alternativeName>
    <alternativeName>
        <fullName>Cytochrome b-c1 complex subunit 3</fullName>
    </alternativeName>
    <alternativeName>
        <fullName>Ubiquinol-cytochrome-c reductase complex cytochrome b subunit</fullName>
    </alternativeName>
</protein>
<accession>O79218</accession>
<feature type="chain" id="PRO_0000061365" description="Cytochrome b">
    <location>
        <begin position="1"/>
        <end position="380"/>
    </location>
</feature>
<feature type="transmembrane region" description="Helical" evidence="2">
    <location>
        <begin position="34"/>
        <end position="54"/>
    </location>
</feature>
<feature type="transmembrane region" description="Helical" evidence="2">
    <location>
        <begin position="78"/>
        <end position="99"/>
    </location>
</feature>
<feature type="transmembrane region" description="Helical" evidence="2">
    <location>
        <begin position="114"/>
        <end position="134"/>
    </location>
</feature>
<feature type="transmembrane region" description="Helical" evidence="2">
    <location>
        <begin position="179"/>
        <end position="199"/>
    </location>
</feature>
<feature type="transmembrane region" description="Helical" evidence="2">
    <location>
        <begin position="227"/>
        <end position="247"/>
    </location>
</feature>
<feature type="transmembrane region" description="Helical" evidence="2">
    <location>
        <begin position="289"/>
        <end position="309"/>
    </location>
</feature>
<feature type="transmembrane region" description="Helical" evidence="2">
    <location>
        <begin position="321"/>
        <end position="341"/>
    </location>
</feature>
<feature type="transmembrane region" description="Helical" evidence="2">
    <location>
        <begin position="348"/>
        <end position="368"/>
    </location>
</feature>
<feature type="binding site" description="axial binding residue" evidence="2">
    <location>
        <position position="84"/>
    </location>
    <ligand>
        <name>heme b</name>
        <dbReference type="ChEBI" id="CHEBI:60344"/>
        <label>b562</label>
    </ligand>
    <ligandPart>
        <name>Fe</name>
        <dbReference type="ChEBI" id="CHEBI:18248"/>
    </ligandPart>
</feature>
<feature type="binding site" description="axial binding residue" evidence="2">
    <location>
        <position position="98"/>
    </location>
    <ligand>
        <name>heme b</name>
        <dbReference type="ChEBI" id="CHEBI:60344"/>
        <label>b566</label>
    </ligand>
    <ligandPart>
        <name>Fe</name>
        <dbReference type="ChEBI" id="CHEBI:18248"/>
    </ligandPart>
</feature>
<feature type="binding site" description="axial binding residue" evidence="2">
    <location>
        <position position="183"/>
    </location>
    <ligand>
        <name>heme b</name>
        <dbReference type="ChEBI" id="CHEBI:60344"/>
        <label>b562</label>
    </ligand>
    <ligandPart>
        <name>Fe</name>
        <dbReference type="ChEBI" id="CHEBI:18248"/>
    </ligandPart>
</feature>
<feature type="binding site" description="axial binding residue" evidence="2">
    <location>
        <position position="197"/>
    </location>
    <ligand>
        <name>heme b</name>
        <dbReference type="ChEBI" id="CHEBI:60344"/>
        <label>b566</label>
    </ligand>
    <ligandPart>
        <name>Fe</name>
        <dbReference type="ChEBI" id="CHEBI:18248"/>
    </ligandPart>
</feature>
<feature type="binding site" evidence="2">
    <location>
        <position position="202"/>
    </location>
    <ligand>
        <name>a ubiquinone</name>
        <dbReference type="ChEBI" id="CHEBI:16389"/>
    </ligand>
</feature>